<feature type="chain" id="PRO_0000008153" description="Small ribosomal subunit biogenesis GTPase RsgA">
    <location>
        <begin position="1"/>
        <end position="350"/>
    </location>
</feature>
<feature type="domain" description="CP-type G" evidence="2">
    <location>
        <begin position="104"/>
        <end position="273"/>
    </location>
</feature>
<feature type="region of interest" description="Disordered" evidence="3">
    <location>
        <begin position="1"/>
        <end position="33"/>
    </location>
</feature>
<feature type="compositionally biased region" description="Polar residues" evidence="3">
    <location>
        <begin position="1"/>
        <end position="17"/>
    </location>
</feature>
<feature type="binding site" evidence="1">
    <location>
        <begin position="160"/>
        <end position="163"/>
    </location>
    <ligand>
        <name>GTP</name>
        <dbReference type="ChEBI" id="CHEBI:37565"/>
    </ligand>
</feature>
<feature type="binding site" evidence="1">
    <location>
        <begin position="214"/>
        <end position="222"/>
    </location>
    <ligand>
        <name>GTP</name>
        <dbReference type="ChEBI" id="CHEBI:37565"/>
    </ligand>
</feature>
<feature type="binding site" evidence="1">
    <location>
        <position position="297"/>
    </location>
    <ligand>
        <name>Zn(2+)</name>
        <dbReference type="ChEBI" id="CHEBI:29105"/>
    </ligand>
</feature>
<feature type="binding site" evidence="1">
    <location>
        <position position="302"/>
    </location>
    <ligand>
        <name>Zn(2+)</name>
        <dbReference type="ChEBI" id="CHEBI:29105"/>
    </ligand>
</feature>
<feature type="binding site" evidence="1">
    <location>
        <position position="304"/>
    </location>
    <ligand>
        <name>Zn(2+)</name>
        <dbReference type="ChEBI" id="CHEBI:29105"/>
    </ligand>
</feature>
<feature type="binding site" evidence="1">
    <location>
        <position position="310"/>
    </location>
    <ligand>
        <name>Zn(2+)</name>
        <dbReference type="ChEBI" id="CHEBI:29105"/>
    </ligand>
</feature>
<dbReference type="EC" id="3.6.1.-" evidence="1"/>
<dbReference type="EMBL" id="AE005174">
    <property type="protein sequence ID" value="AAG59360.1"/>
    <property type="status" value="ALT_INIT"/>
    <property type="molecule type" value="Genomic_DNA"/>
</dbReference>
<dbReference type="EMBL" id="BA000007">
    <property type="protein sequence ID" value="BAB38563.2"/>
    <property type="molecule type" value="Genomic_DNA"/>
</dbReference>
<dbReference type="PIR" id="D86112">
    <property type="entry name" value="D86112"/>
</dbReference>
<dbReference type="PIR" id="D91271">
    <property type="entry name" value="D91271"/>
</dbReference>
<dbReference type="RefSeq" id="NP_313167.2">
    <property type="nucleotide sequence ID" value="NC_002695.1"/>
</dbReference>
<dbReference type="RefSeq" id="WP_000041970.1">
    <property type="nucleotide sequence ID" value="NZ_VOAI01000008.1"/>
</dbReference>
<dbReference type="SMR" id="Q8XDP1"/>
<dbReference type="STRING" id="155864.Z5767"/>
<dbReference type="GeneID" id="915785"/>
<dbReference type="GeneID" id="93777661"/>
<dbReference type="KEGG" id="ece:Z5767"/>
<dbReference type="KEGG" id="ecs:ECs_5140"/>
<dbReference type="PATRIC" id="fig|386585.9.peg.5373"/>
<dbReference type="eggNOG" id="COG1162">
    <property type="taxonomic scope" value="Bacteria"/>
</dbReference>
<dbReference type="HOGENOM" id="CLU_033617_2_0_6"/>
<dbReference type="OMA" id="CLVAAYD"/>
<dbReference type="Proteomes" id="UP000000558">
    <property type="component" value="Chromosome"/>
</dbReference>
<dbReference type="Proteomes" id="UP000002519">
    <property type="component" value="Chromosome"/>
</dbReference>
<dbReference type="GO" id="GO:0005737">
    <property type="term" value="C:cytoplasm"/>
    <property type="evidence" value="ECO:0007669"/>
    <property type="project" value="UniProtKB-SubCell"/>
</dbReference>
<dbReference type="GO" id="GO:0005525">
    <property type="term" value="F:GTP binding"/>
    <property type="evidence" value="ECO:0007669"/>
    <property type="project" value="UniProtKB-UniRule"/>
</dbReference>
<dbReference type="GO" id="GO:0003924">
    <property type="term" value="F:GTPase activity"/>
    <property type="evidence" value="ECO:0007669"/>
    <property type="project" value="UniProtKB-UniRule"/>
</dbReference>
<dbReference type="GO" id="GO:0046872">
    <property type="term" value="F:metal ion binding"/>
    <property type="evidence" value="ECO:0007669"/>
    <property type="project" value="UniProtKB-KW"/>
</dbReference>
<dbReference type="GO" id="GO:0019843">
    <property type="term" value="F:rRNA binding"/>
    <property type="evidence" value="ECO:0007669"/>
    <property type="project" value="UniProtKB-KW"/>
</dbReference>
<dbReference type="GO" id="GO:0042274">
    <property type="term" value="P:ribosomal small subunit biogenesis"/>
    <property type="evidence" value="ECO:0007669"/>
    <property type="project" value="UniProtKB-UniRule"/>
</dbReference>
<dbReference type="CDD" id="cd01854">
    <property type="entry name" value="YjeQ_EngC"/>
    <property type="match status" value="1"/>
</dbReference>
<dbReference type="FunFam" id="1.10.40.50:FF:000001">
    <property type="entry name" value="Small ribosomal subunit biogenesis GTPase RsgA"/>
    <property type="match status" value="1"/>
</dbReference>
<dbReference type="FunFam" id="2.40.50.140:FF:000122">
    <property type="entry name" value="Small ribosomal subunit biogenesis GTPase RsgA"/>
    <property type="match status" value="1"/>
</dbReference>
<dbReference type="FunFam" id="3.40.50.300:FF:000389">
    <property type="entry name" value="Small ribosomal subunit biogenesis GTPase RsgA"/>
    <property type="match status" value="1"/>
</dbReference>
<dbReference type="Gene3D" id="2.40.50.140">
    <property type="entry name" value="Nucleic acid-binding proteins"/>
    <property type="match status" value="1"/>
</dbReference>
<dbReference type="Gene3D" id="3.40.50.300">
    <property type="entry name" value="P-loop containing nucleotide triphosphate hydrolases"/>
    <property type="match status" value="1"/>
</dbReference>
<dbReference type="Gene3D" id="1.10.40.50">
    <property type="entry name" value="Probable gtpase engc, domain 3"/>
    <property type="match status" value="1"/>
</dbReference>
<dbReference type="HAMAP" id="MF_01820">
    <property type="entry name" value="GTPase_RsgA"/>
    <property type="match status" value="1"/>
</dbReference>
<dbReference type="InterPro" id="IPR030378">
    <property type="entry name" value="G_CP_dom"/>
</dbReference>
<dbReference type="InterPro" id="IPR012340">
    <property type="entry name" value="NA-bd_OB-fold"/>
</dbReference>
<dbReference type="InterPro" id="IPR027417">
    <property type="entry name" value="P-loop_NTPase"/>
</dbReference>
<dbReference type="InterPro" id="IPR004881">
    <property type="entry name" value="Ribosome_biogen_GTPase_RsgA"/>
</dbReference>
<dbReference type="InterPro" id="IPR010914">
    <property type="entry name" value="RsgA_GTPase_dom"/>
</dbReference>
<dbReference type="NCBIfam" id="NF008931">
    <property type="entry name" value="PRK12288.1"/>
    <property type="match status" value="1"/>
</dbReference>
<dbReference type="NCBIfam" id="TIGR00157">
    <property type="entry name" value="ribosome small subunit-dependent GTPase A"/>
    <property type="match status" value="1"/>
</dbReference>
<dbReference type="PANTHER" id="PTHR32120">
    <property type="entry name" value="SMALL RIBOSOMAL SUBUNIT BIOGENESIS GTPASE RSGA"/>
    <property type="match status" value="1"/>
</dbReference>
<dbReference type="PANTHER" id="PTHR32120:SF11">
    <property type="entry name" value="SMALL RIBOSOMAL SUBUNIT BIOGENESIS GTPASE RSGA 1, MITOCHONDRIAL-RELATED"/>
    <property type="match status" value="1"/>
</dbReference>
<dbReference type="Pfam" id="PF03193">
    <property type="entry name" value="RsgA_GTPase"/>
    <property type="match status" value="1"/>
</dbReference>
<dbReference type="SUPFAM" id="SSF52540">
    <property type="entry name" value="P-loop containing nucleoside triphosphate hydrolases"/>
    <property type="match status" value="1"/>
</dbReference>
<dbReference type="PROSITE" id="PS50936">
    <property type="entry name" value="ENGC_GTPASE"/>
    <property type="match status" value="1"/>
</dbReference>
<dbReference type="PROSITE" id="PS51721">
    <property type="entry name" value="G_CP"/>
    <property type="match status" value="1"/>
</dbReference>
<protein>
    <recommendedName>
        <fullName evidence="1">Small ribosomal subunit biogenesis GTPase RsgA</fullName>
        <ecNumber evidence="1">3.6.1.-</ecNumber>
    </recommendedName>
</protein>
<gene>
    <name evidence="1" type="primary">rsgA</name>
    <name type="ordered locus">Z5767</name>
    <name type="ordered locus">ECs5140</name>
</gene>
<keyword id="KW-0963">Cytoplasm</keyword>
<keyword id="KW-0342">GTP-binding</keyword>
<keyword id="KW-0378">Hydrolase</keyword>
<keyword id="KW-0479">Metal-binding</keyword>
<keyword id="KW-0547">Nucleotide-binding</keyword>
<keyword id="KW-1185">Reference proteome</keyword>
<keyword id="KW-0690">Ribosome biogenesis</keyword>
<keyword id="KW-0694">RNA-binding</keyword>
<keyword id="KW-0699">rRNA-binding</keyword>
<keyword id="KW-0862">Zinc</keyword>
<evidence type="ECO:0000255" key="1">
    <source>
        <dbReference type="HAMAP-Rule" id="MF_01820"/>
    </source>
</evidence>
<evidence type="ECO:0000255" key="2">
    <source>
        <dbReference type="PROSITE-ProRule" id="PRU01058"/>
    </source>
</evidence>
<evidence type="ECO:0000256" key="3">
    <source>
        <dbReference type="SAM" id="MobiDB-lite"/>
    </source>
</evidence>
<evidence type="ECO:0000305" key="4"/>
<name>RSGA_ECO57</name>
<organism>
    <name type="scientific">Escherichia coli O157:H7</name>
    <dbReference type="NCBI Taxonomy" id="83334"/>
    <lineage>
        <taxon>Bacteria</taxon>
        <taxon>Pseudomonadati</taxon>
        <taxon>Pseudomonadota</taxon>
        <taxon>Gammaproteobacteria</taxon>
        <taxon>Enterobacterales</taxon>
        <taxon>Enterobacteriaceae</taxon>
        <taxon>Escherichia</taxon>
    </lineage>
</organism>
<sequence>MSKNKLSKGQQRRVNANHQRRLKTSKEKPDYDDNLFGEPDEGIVISRFGMHADVESADGDVHRCNIRRTIRSLVTGDRVVWRPGKPAAEGVNVKGIVEAVHERTSVLTRPDFYDGVKPIAANIDQIVIVSAILPELSLNIIDRYLVACETLQIEPIIVLNKIDLLDDEGMAFVNEQMDIYRNIGYRVLMVSSHTQDGLKPLEEALTGRISIFAGQSGVGKSSLLNALLGLQKEILTNDVSDNSGLGQHTTTAARLYHFPHGGDVIDSPGVREFGLWHLEPEQITQGFVEFHDYLGLCKYRDCKHDTDPGCAIREAVEEGKIAETRFENYHRILESMAQVKTRKNFSDTDD</sequence>
<accession>Q8XDP1</accession>
<comment type="function">
    <text evidence="1">One of several proteins that assist in the late maturation steps of the functional core of the 30S ribosomal subunit. Helps release RbfA from mature subunits. May play a role in the assembly of ribosomal proteins into the subunit. Circularly permuted GTPase that catalyzes slow GTP hydrolysis, GTPase activity is stimulated by the 30S ribosomal subunit.</text>
</comment>
<comment type="cofactor">
    <cofactor evidence="1">
        <name>Zn(2+)</name>
        <dbReference type="ChEBI" id="CHEBI:29105"/>
    </cofactor>
    <text evidence="1">Binds 1 zinc ion per subunit.</text>
</comment>
<comment type="subunit">
    <text evidence="1">Monomer. Associates with 30S ribosomal subunit, binds 16S rRNA.</text>
</comment>
<comment type="subcellular location">
    <subcellularLocation>
        <location evidence="1">Cytoplasm</location>
    </subcellularLocation>
</comment>
<comment type="similarity">
    <text evidence="1">Belongs to the TRAFAC class YlqF/YawG GTPase family. RsgA subfamily.</text>
</comment>
<comment type="sequence caution" evidence="4">
    <conflict type="erroneous initiation">
        <sequence resource="EMBL-CDS" id="AAG59360"/>
    </conflict>
    <text>Truncated N-terminus.</text>
</comment>
<reference key="1">
    <citation type="journal article" date="2001" name="Nature">
        <title>Genome sequence of enterohaemorrhagic Escherichia coli O157:H7.</title>
        <authorList>
            <person name="Perna N.T."/>
            <person name="Plunkett G. III"/>
            <person name="Burland V."/>
            <person name="Mau B."/>
            <person name="Glasner J.D."/>
            <person name="Rose D.J."/>
            <person name="Mayhew G.F."/>
            <person name="Evans P.S."/>
            <person name="Gregor J."/>
            <person name="Kirkpatrick H.A."/>
            <person name="Posfai G."/>
            <person name="Hackett J."/>
            <person name="Klink S."/>
            <person name="Boutin A."/>
            <person name="Shao Y."/>
            <person name="Miller L."/>
            <person name="Grotbeck E.J."/>
            <person name="Davis N.W."/>
            <person name="Lim A."/>
            <person name="Dimalanta E.T."/>
            <person name="Potamousis K."/>
            <person name="Apodaca J."/>
            <person name="Anantharaman T.S."/>
            <person name="Lin J."/>
            <person name="Yen G."/>
            <person name="Schwartz D.C."/>
            <person name="Welch R.A."/>
            <person name="Blattner F.R."/>
        </authorList>
    </citation>
    <scope>NUCLEOTIDE SEQUENCE [LARGE SCALE GENOMIC DNA]</scope>
    <source>
        <strain>O157:H7 / EDL933 / ATCC 700927 / EHEC</strain>
    </source>
</reference>
<reference key="2">
    <citation type="journal article" date="2001" name="DNA Res.">
        <title>Complete genome sequence of enterohemorrhagic Escherichia coli O157:H7 and genomic comparison with a laboratory strain K-12.</title>
        <authorList>
            <person name="Hayashi T."/>
            <person name="Makino K."/>
            <person name="Ohnishi M."/>
            <person name="Kurokawa K."/>
            <person name="Ishii K."/>
            <person name="Yokoyama K."/>
            <person name="Han C.-G."/>
            <person name="Ohtsubo E."/>
            <person name="Nakayama K."/>
            <person name="Murata T."/>
            <person name="Tanaka M."/>
            <person name="Tobe T."/>
            <person name="Iida T."/>
            <person name="Takami H."/>
            <person name="Honda T."/>
            <person name="Sasakawa C."/>
            <person name="Ogasawara N."/>
            <person name="Yasunaga T."/>
            <person name="Kuhara S."/>
            <person name="Shiba T."/>
            <person name="Hattori M."/>
            <person name="Shinagawa H."/>
        </authorList>
    </citation>
    <scope>NUCLEOTIDE SEQUENCE [LARGE SCALE GENOMIC DNA]</scope>
    <source>
        <strain>O157:H7 / Sakai / RIMD 0509952 / EHEC</strain>
    </source>
</reference>
<proteinExistence type="inferred from homology"/>